<evidence type="ECO:0000255" key="1">
    <source>
        <dbReference type="HAMAP-Rule" id="MF_00127"/>
    </source>
</evidence>
<feature type="chain" id="PRO_1000016353" description="Histidine--tRNA ligase">
    <location>
        <begin position="1"/>
        <end position="424"/>
    </location>
</feature>
<gene>
    <name evidence="1" type="primary">hisS</name>
    <name type="ordered locus">DSY2432</name>
</gene>
<organism>
    <name type="scientific">Desulfitobacterium hafniense (strain Y51)</name>
    <dbReference type="NCBI Taxonomy" id="138119"/>
    <lineage>
        <taxon>Bacteria</taxon>
        <taxon>Bacillati</taxon>
        <taxon>Bacillota</taxon>
        <taxon>Clostridia</taxon>
        <taxon>Eubacteriales</taxon>
        <taxon>Desulfitobacteriaceae</taxon>
        <taxon>Desulfitobacterium</taxon>
    </lineage>
</organism>
<comment type="catalytic activity">
    <reaction evidence="1">
        <text>tRNA(His) + L-histidine + ATP = L-histidyl-tRNA(His) + AMP + diphosphate + H(+)</text>
        <dbReference type="Rhea" id="RHEA:17313"/>
        <dbReference type="Rhea" id="RHEA-COMP:9665"/>
        <dbReference type="Rhea" id="RHEA-COMP:9689"/>
        <dbReference type="ChEBI" id="CHEBI:15378"/>
        <dbReference type="ChEBI" id="CHEBI:30616"/>
        <dbReference type="ChEBI" id="CHEBI:33019"/>
        <dbReference type="ChEBI" id="CHEBI:57595"/>
        <dbReference type="ChEBI" id="CHEBI:78442"/>
        <dbReference type="ChEBI" id="CHEBI:78527"/>
        <dbReference type="ChEBI" id="CHEBI:456215"/>
        <dbReference type="EC" id="6.1.1.21"/>
    </reaction>
</comment>
<comment type="subunit">
    <text evidence="1">Homodimer.</text>
</comment>
<comment type="subcellular location">
    <subcellularLocation>
        <location evidence="1">Cytoplasm</location>
    </subcellularLocation>
</comment>
<comment type="similarity">
    <text evidence="1">Belongs to the class-II aminoacyl-tRNA synthetase family.</text>
</comment>
<accession>Q24US1</accession>
<sequence length="424" mass="47846">MAIQRPKGTQDLLPGVVEQWQDLEEQIRKICREYGYQEIRTPIFEATELFQRGVGETTDIVNKEMYTFLDKGDRSITLRPEGTASVCRAYVENKLHGGPQPVKLYYIGPMFRYERPQSGRFRQFHQFGVEVLGVDKPMVDAEVITLVWDLYSRLGLKGLEVHVNSVGCPSCRPEHKKKLQEFLAPRQEQLCKDCQSRFEKNPLRILDCKNPTCQEITQGAPTTLDTLCEECAEHFKELQSLLSAAEVVYKVNPRLVRGLDYYRKTAFEVLVEDIGAQSAICGGGRYDGLVQEVGGPPTPGIGFAMGMERVLAARKLAQGEQEGEGKEYLMLVALGDQAQREGFAIVSRLRKQGMPAGIDLLGRSLKAQLKAADRVQAHYAAILGEEELHKGIIILRDLRLGEQVELPLQDFEEVVWKRYKEDGN</sequence>
<dbReference type="EC" id="6.1.1.21" evidence="1"/>
<dbReference type="EMBL" id="AP008230">
    <property type="protein sequence ID" value="BAE84221.1"/>
    <property type="molecule type" value="Genomic_DNA"/>
</dbReference>
<dbReference type="RefSeq" id="WP_011460333.1">
    <property type="nucleotide sequence ID" value="NC_007907.1"/>
</dbReference>
<dbReference type="SMR" id="Q24US1"/>
<dbReference type="STRING" id="138119.DSY2432"/>
<dbReference type="KEGG" id="dsy:DSY2432"/>
<dbReference type="eggNOG" id="COG0124">
    <property type="taxonomic scope" value="Bacteria"/>
</dbReference>
<dbReference type="HOGENOM" id="CLU_025113_1_1_9"/>
<dbReference type="Proteomes" id="UP000001946">
    <property type="component" value="Chromosome"/>
</dbReference>
<dbReference type="GO" id="GO:0005737">
    <property type="term" value="C:cytoplasm"/>
    <property type="evidence" value="ECO:0007669"/>
    <property type="project" value="UniProtKB-SubCell"/>
</dbReference>
<dbReference type="GO" id="GO:0005524">
    <property type="term" value="F:ATP binding"/>
    <property type="evidence" value="ECO:0007669"/>
    <property type="project" value="UniProtKB-UniRule"/>
</dbReference>
<dbReference type="GO" id="GO:0140096">
    <property type="term" value="F:catalytic activity, acting on a protein"/>
    <property type="evidence" value="ECO:0007669"/>
    <property type="project" value="UniProtKB-ARBA"/>
</dbReference>
<dbReference type="GO" id="GO:0004821">
    <property type="term" value="F:histidine-tRNA ligase activity"/>
    <property type="evidence" value="ECO:0007669"/>
    <property type="project" value="UniProtKB-UniRule"/>
</dbReference>
<dbReference type="GO" id="GO:0016740">
    <property type="term" value="F:transferase activity"/>
    <property type="evidence" value="ECO:0007669"/>
    <property type="project" value="UniProtKB-ARBA"/>
</dbReference>
<dbReference type="GO" id="GO:0006427">
    <property type="term" value="P:histidyl-tRNA aminoacylation"/>
    <property type="evidence" value="ECO:0007669"/>
    <property type="project" value="UniProtKB-UniRule"/>
</dbReference>
<dbReference type="CDD" id="cd00773">
    <property type="entry name" value="HisRS-like_core"/>
    <property type="match status" value="1"/>
</dbReference>
<dbReference type="CDD" id="cd00859">
    <property type="entry name" value="HisRS_anticodon"/>
    <property type="match status" value="1"/>
</dbReference>
<dbReference type="FunFam" id="3.30.930.10:FF:000005">
    <property type="entry name" value="Histidine--tRNA ligase"/>
    <property type="match status" value="1"/>
</dbReference>
<dbReference type="Gene3D" id="3.40.50.800">
    <property type="entry name" value="Anticodon-binding domain"/>
    <property type="match status" value="1"/>
</dbReference>
<dbReference type="Gene3D" id="3.30.930.10">
    <property type="entry name" value="Bira Bifunctional Protein, Domain 2"/>
    <property type="match status" value="1"/>
</dbReference>
<dbReference type="HAMAP" id="MF_00127">
    <property type="entry name" value="His_tRNA_synth"/>
    <property type="match status" value="1"/>
</dbReference>
<dbReference type="InterPro" id="IPR006195">
    <property type="entry name" value="aa-tRNA-synth_II"/>
</dbReference>
<dbReference type="InterPro" id="IPR045864">
    <property type="entry name" value="aa-tRNA-synth_II/BPL/LPL"/>
</dbReference>
<dbReference type="InterPro" id="IPR004154">
    <property type="entry name" value="Anticodon-bd"/>
</dbReference>
<dbReference type="InterPro" id="IPR036621">
    <property type="entry name" value="Anticodon-bd_dom_sf"/>
</dbReference>
<dbReference type="InterPro" id="IPR015807">
    <property type="entry name" value="His-tRNA-ligase"/>
</dbReference>
<dbReference type="InterPro" id="IPR041715">
    <property type="entry name" value="HisRS-like_core"/>
</dbReference>
<dbReference type="InterPro" id="IPR004516">
    <property type="entry name" value="HisRS/HisZ"/>
</dbReference>
<dbReference type="InterPro" id="IPR033656">
    <property type="entry name" value="HisRS_anticodon"/>
</dbReference>
<dbReference type="NCBIfam" id="TIGR00442">
    <property type="entry name" value="hisS"/>
    <property type="match status" value="1"/>
</dbReference>
<dbReference type="PANTHER" id="PTHR43707:SF1">
    <property type="entry name" value="HISTIDINE--TRNA LIGASE, MITOCHONDRIAL-RELATED"/>
    <property type="match status" value="1"/>
</dbReference>
<dbReference type="PANTHER" id="PTHR43707">
    <property type="entry name" value="HISTIDYL-TRNA SYNTHETASE"/>
    <property type="match status" value="1"/>
</dbReference>
<dbReference type="Pfam" id="PF03129">
    <property type="entry name" value="HGTP_anticodon"/>
    <property type="match status" value="1"/>
</dbReference>
<dbReference type="Pfam" id="PF13393">
    <property type="entry name" value="tRNA-synt_His"/>
    <property type="match status" value="1"/>
</dbReference>
<dbReference type="PIRSF" id="PIRSF001549">
    <property type="entry name" value="His-tRNA_synth"/>
    <property type="match status" value="1"/>
</dbReference>
<dbReference type="SUPFAM" id="SSF52954">
    <property type="entry name" value="Class II aaRS ABD-related"/>
    <property type="match status" value="1"/>
</dbReference>
<dbReference type="SUPFAM" id="SSF55681">
    <property type="entry name" value="Class II aaRS and biotin synthetases"/>
    <property type="match status" value="1"/>
</dbReference>
<dbReference type="PROSITE" id="PS50862">
    <property type="entry name" value="AA_TRNA_LIGASE_II"/>
    <property type="match status" value="1"/>
</dbReference>
<reference key="1">
    <citation type="journal article" date="2006" name="J. Bacteriol.">
        <title>Complete genome sequence of the dehalorespiring bacterium Desulfitobacterium hafniense Y51 and comparison with Dehalococcoides ethenogenes 195.</title>
        <authorList>
            <person name="Nonaka H."/>
            <person name="Keresztes G."/>
            <person name="Shinoda Y."/>
            <person name="Ikenaga Y."/>
            <person name="Abe M."/>
            <person name="Naito K."/>
            <person name="Inatomi K."/>
            <person name="Furukawa K."/>
            <person name="Inui M."/>
            <person name="Yukawa H."/>
        </authorList>
    </citation>
    <scope>NUCLEOTIDE SEQUENCE [LARGE SCALE GENOMIC DNA]</scope>
    <source>
        <strain>Y51</strain>
    </source>
</reference>
<protein>
    <recommendedName>
        <fullName evidence="1">Histidine--tRNA ligase</fullName>
        <ecNumber evidence="1">6.1.1.21</ecNumber>
    </recommendedName>
    <alternativeName>
        <fullName evidence="1">Histidyl-tRNA synthetase</fullName>
        <shortName evidence="1">HisRS</shortName>
    </alternativeName>
</protein>
<proteinExistence type="inferred from homology"/>
<name>SYH_DESHY</name>
<keyword id="KW-0030">Aminoacyl-tRNA synthetase</keyword>
<keyword id="KW-0067">ATP-binding</keyword>
<keyword id="KW-0963">Cytoplasm</keyword>
<keyword id="KW-0436">Ligase</keyword>
<keyword id="KW-0547">Nucleotide-binding</keyword>
<keyword id="KW-0648">Protein biosynthesis</keyword>
<keyword id="KW-1185">Reference proteome</keyword>